<dbReference type="EC" id="3.6.-.-" evidence="1"/>
<dbReference type="EMBL" id="CP000553">
    <property type="protein sequence ID" value="ABM74828.1"/>
    <property type="molecule type" value="Genomic_DNA"/>
</dbReference>
<dbReference type="RefSeq" id="WP_011823046.1">
    <property type="nucleotide sequence ID" value="NC_008819.1"/>
</dbReference>
<dbReference type="SMR" id="A2C018"/>
<dbReference type="KEGG" id="pme:NATL1_02641"/>
<dbReference type="eggNOG" id="COG0486">
    <property type="taxonomic scope" value="Bacteria"/>
</dbReference>
<dbReference type="HOGENOM" id="CLU_019624_4_1_3"/>
<dbReference type="Proteomes" id="UP000002592">
    <property type="component" value="Chromosome"/>
</dbReference>
<dbReference type="GO" id="GO:0005829">
    <property type="term" value="C:cytosol"/>
    <property type="evidence" value="ECO:0007669"/>
    <property type="project" value="TreeGrafter"/>
</dbReference>
<dbReference type="GO" id="GO:0005525">
    <property type="term" value="F:GTP binding"/>
    <property type="evidence" value="ECO:0007669"/>
    <property type="project" value="UniProtKB-UniRule"/>
</dbReference>
<dbReference type="GO" id="GO:0003924">
    <property type="term" value="F:GTPase activity"/>
    <property type="evidence" value="ECO:0007669"/>
    <property type="project" value="UniProtKB-UniRule"/>
</dbReference>
<dbReference type="GO" id="GO:0046872">
    <property type="term" value="F:metal ion binding"/>
    <property type="evidence" value="ECO:0007669"/>
    <property type="project" value="UniProtKB-KW"/>
</dbReference>
<dbReference type="GO" id="GO:0030488">
    <property type="term" value="P:tRNA methylation"/>
    <property type="evidence" value="ECO:0007669"/>
    <property type="project" value="TreeGrafter"/>
</dbReference>
<dbReference type="GO" id="GO:0002098">
    <property type="term" value="P:tRNA wobble uridine modification"/>
    <property type="evidence" value="ECO:0007669"/>
    <property type="project" value="TreeGrafter"/>
</dbReference>
<dbReference type="CDD" id="cd04164">
    <property type="entry name" value="trmE"/>
    <property type="match status" value="1"/>
</dbReference>
<dbReference type="CDD" id="cd14858">
    <property type="entry name" value="TrmE_N"/>
    <property type="match status" value="1"/>
</dbReference>
<dbReference type="FunFam" id="3.40.50.300:FF:000494">
    <property type="entry name" value="tRNA modification GTPase MnmE"/>
    <property type="match status" value="1"/>
</dbReference>
<dbReference type="Gene3D" id="3.40.50.300">
    <property type="entry name" value="P-loop containing nucleotide triphosphate hydrolases"/>
    <property type="match status" value="1"/>
</dbReference>
<dbReference type="Gene3D" id="3.30.1360.120">
    <property type="entry name" value="Probable tRNA modification gtpase trme, domain 1"/>
    <property type="match status" value="1"/>
</dbReference>
<dbReference type="Gene3D" id="1.20.120.430">
    <property type="entry name" value="tRNA modification GTPase MnmE domain 2"/>
    <property type="match status" value="1"/>
</dbReference>
<dbReference type="HAMAP" id="MF_00379">
    <property type="entry name" value="GTPase_MnmE"/>
    <property type="match status" value="1"/>
</dbReference>
<dbReference type="InterPro" id="IPR031168">
    <property type="entry name" value="G_TrmE"/>
</dbReference>
<dbReference type="InterPro" id="IPR006073">
    <property type="entry name" value="GTP-bd"/>
</dbReference>
<dbReference type="InterPro" id="IPR018948">
    <property type="entry name" value="GTP-bd_TrmE_N"/>
</dbReference>
<dbReference type="InterPro" id="IPR004520">
    <property type="entry name" value="GTPase_MnmE"/>
</dbReference>
<dbReference type="InterPro" id="IPR027368">
    <property type="entry name" value="MnmE_dom2"/>
</dbReference>
<dbReference type="InterPro" id="IPR025867">
    <property type="entry name" value="MnmE_helical"/>
</dbReference>
<dbReference type="InterPro" id="IPR027417">
    <property type="entry name" value="P-loop_NTPase"/>
</dbReference>
<dbReference type="InterPro" id="IPR005225">
    <property type="entry name" value="Small_GTP-bd"/>
</dbReference>
<dbReference type="InterPro" id="IPR027266">
    <property type="entry name" value="TrmE/GcvT_dom1"/>
</dbReference>
<dbReference type="NCBIfam" id="TIGR00450">
    <property type="entry name" value="mnmE_trmE_thdF"/>
    <property type="match status" value="1"/>
</dbReference>
<dbReference type="NCBIfam" id="NF003661">
    <property type="entry name" value="PRK05291.1-3"/>
    <property type="match status" value="1"/>
</dbReference>
<dbReference type="NCBIfam" id="TIGR00231">
    <property type="entry name" value="small_GTP"/>
    <property type="match status" value="1"/>
</dbReference>
<dbReference type="PANTHER" id="PTHR42714">
    <property type="entry name" value="TRNA MODIFICATION GTPASE GTPBP3"/>
    <property type="match status" value="1"/>
</dbReference>
<dbReference type="PANTHER" id="PTHR42714:SF2">
    <property type="entry name" value="TRNA MODIFICATION GTPASE GTPBP3, MITOCHONDRIAL"/>
    <property type="match status" value="1"/>
</dbReference>
<dbReference type="Pfam" id="PF01926">
    <property type="entry name" value="MMR_HSR1"/>
    <property type="match status" value="1"/>
</dbReference>
<dbReference type="Pfam" id="PF12631">
    <property type="entry name" value="MnmE_helical"/>
    <property type="match status" value="1"/>
</dbReference>
<dbReference type="Pfam" id="PF10396">
    <property type="entry name" value="TrmE_N"/>
    <property type="match status" value="1"/>
</dbReference>
<dbReference type="PRINTS" id="PR00449">
    <property type="entry name" value="RASTRNSFRMNG"/>
</dbReference>
<dbReference type="SMART" id="SM00175">
    <property type="entry name" value="RAB"/>
    <property type="match status" value="1"/>
</dbReference>
<dbReference type="SUPFAM" id="SSF52540">
    <property type="entry name" value="P-loop containing nucleoside triphosphate hydrolases"/>
    <property type="match status" value="1"/>
</dbReference>
<dbReference type="PROSITE" id="PS51709">
    <property type="entry name" value="G_TRME"/>
    <property type="match status" value="1"/>
</dbReference>
<keyword id="KW-0963">Cytoplasm</keyword>
<keyword id="KW-0342">GTP-binding</keyword>
<keyword id="KW-0378">Hydrolase</keyword>
<keyword id="KW-0460">Magnesium</keyword>
<keyword id="KW-0479">Metal-binding</keyword>
<keyword id="KW-0547">Nucleotide-binding</keyword>
<keyword id="KW-0630">Potassium</keyword>
<keyword id="KW-0819">tRNA processing</keyword>
<proteinExistence type="inferred from homology"/>
<accession>A2C018</accession>
<gene>
    <name evidence="1" type="primary">mnmE</name>
    <name evidence="1" type="synonym">trmE</name>
    <name type="ordered locus">NATL1_02641</name>
</gene>
<organism>
    <name type="scientific">Prochlorococcus marinus (strain NATL1A)</name>
    <dbReference type="NCBI Taxonomy" id="167555"/>
    <lineage>
        <taxon>Bacteria</taxon>
        <taxon>Bacillati</taxon>
        <taxon>Cyanobacteriota</taxon>
        <taxon>Cyanophyceae</taxon>
        <taxon>Synechococcales</taxon>
        <taxon>Prochlorococcaceae</taxon>
        <taxon>Prochlorococcus</taxon>
    </lineage>
</organism>
<name>MNME_PROM1</name>
<reference key="1">
    <citation type="journal article" date="2007" name="PLoS Genet.">
        <title>Patterns and implications of gene gain and loss in the evolution of Prochlorococcus.</title>
        <authorList>
            <person name="Kettler G.C."/>
            <person name="Martiny A.C."/>
            <person name="Huang K."/>
            <person name="Zucker J."/>
            <person name="Coleman M.L."/>
            <person name="Rodrigue S."/>
            <person name="Chen F."/>
            <person name="Lapidus A."/>
            <person name="Ferriera S."/>
            <person name="Johnson J."/>
            <person name="Steglich C."/>
            <person name="Church G.M."/>
            <person name="Richardson P."/>
            <person name="Chisholm S.W."/>
        </authorList>
    </citation>
    <scope>NUCLEOTIDE SEQUENCE [LARGE SCALE GENOMIC DNA]</scope>
    <source>
        <strain>NATL1A</strain>
    </source>
</reference>
<feature type="chain" id="PRO_1000048846" description="tRNA modification GTPase MnmE">
    <location>
        <begin position="1"/>
        <end position="464"/>
    </location>
</feature>
<feature type="domain" description="TrmE-type G">
    <location>
        <begin position="226"/>
        <end position="387"/>
    </location>
</feature>
<feature type="binding site" evidence="1">
    <location>
        <position position="29"/>
    </location>
    <ligand>
        <name>(6S)-5-formyl-5,6,7,8-tetrahydrofolate</name>
        <dbReference type="ChEBI" id="CHEBI:57457"/>
    </ligand>
</feature>
<feature type="binding site" evidence="1">
    <location>
        <position position="91"/>
    </location>
    <ligand>
        <name>(6S)-5-formyl-5,6,7,8-tetrahydrofolate</name>
        <dbReference type="ChEBI" id="CHEBI:57457"/>
    </ligand>
</feature>
<feature type="binding site" evidence="1">
    <location>
        <position position="131"/>
    </location>
    <ligand>
        <name>(6S)-5-formyl-5,6,7,8-tetrahydrofolate</name>
        <dbReference type="ChEBI" id="CHEBI:57457"/>
    </ligand>
</feature>
<feature type="binding site" evidence="1">
    <location>
        <begin position="236"/>
        <end position="241"/>
    </location>
    <ligand>
        <name>GTP</name>
        <dbReference type="ChEBI" id="CHEBI:37565"/>
    </ligand>
</feature>
<feature type="binding site" evidence="1">
    <location>
        <position position="236"/>
    </location>
    <ligand>
        <name>K(+)</name>
        <dbReference type="ChEBI" id="CHEBI:29103"/>
    </ligand>
</feature>
<feature type="binding site" evidence="1">
    <location>
        <position position="240"/>
    </location>
    <ligand>
        <name>Mg(2+)</name>
        <dbReference type="ChEBI" id="CHEBI:18420"/>
    </ligand>
</feature>
<feature type="binding site" evidence="1">
    <location>
        <begin position="255"/>
        <end position="261"/>
    </location>
    <ligand>
        <name>GTP</name>
        <dbReference type="ChEBI" id="CHEBI:37565"/>
    </ligand>
</feature>
<feature type="binding site" evidence="1">
    <location>
        <position position="255"/>
    </location>
    <ligand>
        <name>K(+)</name>
        <dbReference type="ChEBI" id="CHEBI:29103"/>
    </ligand>
</feature>
<feature type="binding site" evidence="1">
    <location>
        <position position="257"/>
    </location>
    <ligand>
        <name>K(+)</name>
        <dbReference type="ChEBI" id="CHEBI:29103"/>
    </ligand>
</feature>
<feature type="binding site" evidence="1">
    <location>
        <position position="260"/>
    </location>
    <ligand>
        <name>K(+)</name>
        <dbReference type="ChEBI" id="CHEBI:29103"/>
    </ligand>
</feature>
<feature type="binding site" evidence="1">
    <location>
        <position position="261"/>
    </location>
    <ligand>
        <name>Mg(2+)</name>
        <dbReference type="ChEBI" id="CHEBI:18420"/>
    </ligand>
</feature>
<feature type="binding site" evidence="1">
    <location>
        <begin position="280"/>
        <end position="283"/>
    </location>
    <ligand>
        <name>GTP</name>
        <dbReference type="ChEBI" id="CHEBI:37565"/>
    </ligand>
</feature>
<feature type="binding site" evidence="1">
    <location>
        <position position="464"/>
    </location>
    <ligand>
        <name>(6S)-5-formyl-5,6,7,8-tetrahydrofolate</name>
        <dbReference type="ChEBI" id="CHEBI:57457"/>
    </ligand>
</feature>
<evidence type="ECO:0000255" key="1">
    <source>
        <dbReference type="HAMAP-Rule" id="MF_00379"/>
    </source>
</evidence>
<comment type="function">
    <text evidence="1">Exhibits a very high intrinsic GTPase hydrolysis rate. Involved in the addition of a carboxymethylaminomethyl (cmnm) group at the wobble position (U34) of certain tRNAs, forming tRNA-cmnm(5)s(2)U34.</text>
</comment>
<comment type="cofactor">
    <cofactor evidence="1">
        <name>K(+)</name>
        <dbReference type="ChEBI" id="CHEBI:29103"/>
    </cofactor>
    <text evidence="1">Binds 1 potassium ion per subunit.</text>
</comment>
<comment type="subunit">
    <text evidence="1">Homodimer. Heterotetramer of two MnmE and two MnmG subunits.</text>
</comment>
<comment type="subcellular location">
    <subcellularLocation>
        <location evidence="1">Cytoplasm</location>
    </subcellularLocation>
</comment>
<comment type="similarity">
    <text evidence="1">Belongs to the TRAFAC class TrmE-Era-EngA-EngB-Septin-like GTPase superfamily. TrmE GTPase family.</text>
</comment>
<sequence length="464" mass="51473">MNSFSPTEDTIAAIATAVSPGQGSIAAIRISGSSAIETSKNIVDVPGIQDWSTHKVLYGHVTEENRKKYIDEVLILVMKGPRSFTGEDVVEIHCHGGIIPVQKILERILAFPSVRRAEPGEFSQRAVLNGRLSLTQAESISELVSARSRKAAELAINGIEGNIQTTIQSIRKRLIEQLTEIEARIDFEEDLPLLDEKHVKNEIVAIKKDLNELIDNAKRGSWVRSGLKVALAGKPNVGKSSLMNRLSKQEKAIVTDLPGTTRDILESEIVLEGIPVTFIDTAGLRDTKDIIEKIGISRTKKTLIHADLIILIFDYSSGWTNEDESILKQLPVNIPLLIVGNKSDLMNDQSFEKVPKYILKKENLVILSAKTGNGEDDLINYLLKKCGSSQTHGLDIALNERQLDLAKSTTESLENINKVFDEKLPWDFWTIDLRQAINYLGELTGEDLTENLLDNIFSKFCIGK</sequence>
<protein>
    <recommendedName>
        <fullName evidence="1">tRNA modification GTPase MnmE</fullName>
        <ecNumber evidence="1">3.6.-.-</ecNumber>
    </recommendedName>
</protein>